<feature type="peptide" id="PRO_0000378677" description="Pyrokinin-5" evidence="3">
    <location>
        <begin position="1"/>
        <end position="17"/>
    </location>
</feature>
<feature type="modified residue" description="Leucine amide" evidence="3">
    <location>
        <position position="17"/>
    </location>
</feature>
<protein>
    <recommendedName>
        <fullName evidence="1">Pyrokinin-5</fullName>
    </recommendedName>
    <alternativeName>
        <fullName evidence="4">BlaCr-Capa-PK</fullName>
    </alternativeName>
    <alternativeName>
        <fullName evidence="1">FXPRL-amide</fullName>
    </alternativeName>
</protein>
<evidence type="ECO:0000250" key="1">
    <source>
        <dbReference type="UniProtKB" id="P82617"/>
    </source>
</evidence>
<evidence type="ECO:0000255" key="2"/>
<evidence type="ECO:0000269" key="3">
    <source>
    </source>
</evidence>
<evidence type="ECO:0000303" key="4">
    <source>
    </source>
</evidence>
<evidence type="ECO:0000305" key="5"/>
<name>PPK5_BLACR</name>
<organism>
    <name type="scientific">Blaberus craniifer</name>
    <name type="common">Death's head cockroach</name>
    <dbReference type="NCBI Taxonomy" id="6982"/>
    <lineage>
        <taxon>Eukaryota</taxon>
        <taxon>Metazoa</taxon>
        <taxon>Ecdysozoa</taxon>
        <taxon>Arthropoda</taxon>
        <taxon>Hexapoda</taxon>
        <taxon>Insecta</taxon>
        <taxon>Pterygota</taxon>
        <taxon>Neoptera</taxon>
        <taxon>Polyneoptera</taxon>
        <taxon>Dictyoptera</taxon>
        <taxon>Blattodea</taxon>
        <taxon>Blaberoidea</taxon>
        <taxon>Blaberidae</taxon>
        <taxon>Blaberinae</taxon>
        <taxon>Blaberus</taxon>
    </lineage>
</organism>
<proteinExistence type="evidence at protein level"/>
<accession>P85545</accession>
<dbReference type="GO" id="GO:0005576">
    <property type="term" value="C:extracellular region"/>
    <property type="evidence" value="ECO:0007669"/>
    <property type="project" value="UniProtKB-SubCell"/>
</dbReference>
<dbReference type="GO" id="GO:0005184">
    <property type="term" value="F:neuropeptide hormone activity"/>
    <property type="evidence" value="ECO:0007669"/>
    <property type="project" value="InterPro"/>
</dbReference>
<dbReference type="GO" id="GO:0007218">
    <property type="term" value="P:neuropeptide signaling pathway"/>
    <property type="evidence" value="ECO:0007669"/>
    <property type="project" value="UniProtKB-KW"/>
</dbReference>
<dbReference type="InterPro" id="IPR001484">
    <property type="entry name" value="Pyrokinin_CS"/>
</dbReference>
<dbReference type="PROSITE" id="PS00539">
    <property type="entry name" value="PYROKININ"/>
    <property type="match status" value="1"/>
</dbReference>
<reference evidence="5" key="1">
    <citation type="journal article" date="2009" name="BMC Evol. Biol.">
        <title>A proteomic approach for studying insect phylogeny: CAPA peptides of ancient insect taxa (Dictyoptera, Blattoptera) as a test case.</title>
        <authorList>
            <person name="Roth S."/>
            <person name="Fromm B."/>
            <person name="Gaede G."/>
            <person name="Predel R."/>
        </authorList>
    </citation>
    <scope>PROTEIN SEQUENCE</scope>
    <scope>AMIDATION AT LEU-17</scope>
    <source>
        <tissue evidence="3">Abdominal perisympathetic organs</tissue>
    </source>
</reference>
<comment type="function">
    <text evidence="1">Myoactive.</text>
</comment>
<comment type="subcellular location">
    <subcellularLocation>
        <location evidence="5">Secreted</location>
    </subcellularLocation>
</comment>
<comment type="similarity">
    <text evidence="2">Belongs to the pyrokinin family.</text>
</comment>
<sequence>AGESSNEAKGMWFGPRL</sequence>
<keyword id="KW-0027">Amidation</keyword>
<keyword id="KW-0903">Direct protein sequencing</keyword>
<keyword id="KW-0527">Neuropeptide</keyword>
<keyword id="KW-0964">Secreted</keyword>